<sequence>EDEVEETLPVAEEGREKSCITWRNSCVHNDKGCCFPWSCVCWSQTVSRNSSRKEKKCQCRLW</sequence>
<accession>A9XDG5</accession>
<evidence type="ECO:0000250" key="1"/>
<evidence type="ECO:0000250" key="2">
    <source>
        <dbReference type="UniProtKB" id="A0A0G3F8Z3"/>
    </source>
</evidence>
<evidence type="ECO:0000250" key="3">
    <source>
        <dbReference type="UniProtKB" id="P0DRA9"/>
    </source>
</evidence>
<evidence type="ECO:0000250" key="4">
    <source>
        <dbReference type="UniProtKB" id="P85079"/>
    </source>
</evidence>
<evidence type="ECO:0000303" key="5">
    <source>
    </source>
</evidence>
<evidence type="ECO:0000305" key="6"/>
<evidence type="ECO:0000305" key="7">
    <source>
    </source>
</evidence>
<reference key="1">
    <citation type="journal article" date="2007" name="Toxicon">
        <title>Omega-Lsp-IA, a novel modulator of P-type Ca(2+) channels.</title>
        <authorList>
            <person name="Pluzhnikov K.A."/>
            <person name="Vassilevski A."/>
            <person name="Korolkova Y."/>
            <person name="Fisyunov A."/>
            <person name="Iegorova O."/>
            <person name="Krishtal O."/>
            <person name="Grishin E."/>
        </authorList>
    </citation>
    <scope>NUCLEOTIDE SEQUENCE [MRNA]</scope>
    <source>
        <tissue>Venom gland</tissue>
    </source>
</reference>
<dbReference type="EMBL" id="EF187337">
    <property type="protein sequence ID" value="ABP68831.1"/>
    <property type="molecule type" value="mRNA"/>
</dbReference>
<dbReference type="SMR" id="A9XDG5"/>
<dbReference type="ArachnoServer" id="AS000634">
    <property type="toxin name" value="omega-lycotoxin-Gsp2671e"/>
</dbReference>
<dbReference type="GO" id="GO:0005576">
    <property type="term" value="C:extracellular region"/>
    <property type="evidence" value="ECO:0007669"/>
    <property type="project" value="UniProtKB-SubCell"/>
</dbReference>
<dbReference type="GO" id="GO:0005246">
    <property type="term" value="F:calcium channel regulator activity"/>
    <property type="evidence" value="ECO:0007669"/>
    <property type="project" value="UniProtKB-KW"/>
</dbReference>
<dbReference type="GO" id="GO:0090729">
    <property type="term" value="F:toxin activity"/>
    <property type="evidence" value="ECO:0007669"/>
    <property type="project" value="UniProtKB-KW"/>
</dbReference>
<proteinExistence type="evidence at transcript level"/>
<organism>
    <name type="scientific">Alopecosa marikovskyi</name>
    <name type="common">Wolf spider</name>
    <name type="synonym">Lycosa kazakhstanicus</name>
    <dbReference type="NCBI Taxonomy" id="2066572"/>
    <lineage>
        <taxon>Eukaryota</taxon>
        <taxon>Metazoa</taxon>
        <taxon>Ecdysozoa</taxon>
        <taxon>Arthropoda</taxon>
        <taxon>Chelicerata</taxon>
        <taxon>Arachnida</taxon>
        <taxon>Araneae</taxon>
        <taxon>Araneomorphae</taxon>
        <taxon>Entelegynae</taxon>
        <taxon>Lycosoidea</taxon>
        <taxon>Lycosidae</taxon>
        <taxon>Alopecosa</taxon>
    </lineage>
</organism>
<keyword id="KW-0108">Calcium channel impairing toxin</keyword>
<keyword id="KW-1015">Disulfide bond</keyword>
<keyword id="KW-0872">Ion channel impairing toxin</keyword>
<keyword id="KW-0960">Knottin</keyword>
<keyword id="KW-0528">Neurotoxin</keyword>
<keyword id="KW-0964">Secreted</keyword>
<keyword id="KW-0800">Toxin</keyword>
<keyword id="KW-1218">Voltage-gated calcium channel impairing toxin</keyword>
<name>TLCOE_ALOMR</name>
<protein>
    <recommendedName>
        <fullName evidence="6">Omega-lycotoxin-Am1e</fullName>
        <shortName evidence="6">Omega-LCTX-Am1e</shortName>
    </recommendedName>
    <alternativeName>
        <fullName evidence="5 6">Omega-Lsp-IA-like 6</fullName>
    </alternativeName>
    <alternativeName>
        <fullName evidence="6">Omega-lycotoxin-Gsp(267)1e</fullName>
        <shortName evidence="6">Omega-LCTX-Gsp(267)1e</shortName>
    </alternativeName>
</protein>
<feature type="propeptide" id="PRO_0000388741" evidence="1">
    <location>
        <begin position="1" status="less than"/>
        <end position="15"/>
    </location>
</feature>
<feature type="chain" id="PRO_0000388742" description="Omega-lycotoxin-Am1e">
    <location>
        <begin position="16"/>
        <end position="62"/>
    </location>
</feature>
<feature type="disulfide bond" evidence="2">
    <location>
        <begin position="19"/>
        <end position="34"/>
    </location>
</feature>
<feature type="disulfide bond" evidence="2">
    <location>
        <begin position="26"/>
        <end position="39"/>
    </location>
</feature>
<feature type="disulfide bond" evidence="2">
    <location>
        <begin position="33"/>
        <end position="59"/>
    </location>
</feature>
<feature type="disulfide bond" evidence="2">
    <location>
        <begin position="41"/>
        <end position="57"/>
    </location>
</feature>
<feature type="non-terminal residue">
    <location>
        <position position="1"/>
    </location>
</feature>
<comment type="function">
    <text evidence="3 4">Modulates Cav2.1/CACNA1A voltage-gated calcium channels (P/Q-type currents) in rat cerebellar Purkinje cells and hippocampal CA1-CA3 neurons (By similarity). At saturating concentrations (&gt;10 nM) decelerates activation kinetics and slightly increases peak amplitude without affecting deactivation kinetics (By similarity). In vivo, does not cause death when intravenously injected into mice (By similarity). In rat models, through its activity on Cav2.1/CACNA1A, has an ameliorative effect on memory defects provoked by hyperstimulation of N-methyl-D-aspartate receptors (NMDARs) in the hippocampus (By similarity).</text>
</comment>
<comment type="subcellular location">
    <subcellularLocation>
        <location evidence="7">Secreted</location>
    </subcellularLocation>
</comment>
<comment type="tissue specificity">
    <text evidence="7">Expressed by the venom gland.</text>
</comment>
<comment type="domain">
    <text evidence="6">The presence of a 'disulfide through disulfide knot' structurally defines this protein as a knottin.</text>
</comment>
<comment type="miscellaneous">
    <text evidence="6">According to the nomenclature proposed by King and colleagues (2008), 'Gsp(267)' comes from the species name 'Geolycosa sp (strain A267TDLS2-KZARNA)' (PubMed:17888477). This species has been reclassified since that study, as indicated in the work of Oparin and colleagues (2016) (PMID:27412961).</text>
</comment>
<comment type="similarity">
    <text evidence="6">Belongs to the neurotoxin omega-lctx family.</text>
</comment>